<feature type="chain" id="PRO_1000165502" description="Small ribosomal subunit protein uS3">
    <location>
        <begin position="1"/>
        <end position="281"/>
    </location>
</feature>
<feature type="domain" description="KH type-2" evidence="1">
    <location>
        <begin position="38"/>
        <end position="106"/>
    </location>
</feature>
<feature type="region of interest" description="Disordered" evidence="2">
    <location>
        <begin position="218"/>
        <end position="281"/>
    </location>
</feature>
<feature type="compositionally biased region" description="Low complexity" evidence="2">
    <location>
        <begin position="238"/>
        <end position="256"/>
    </location>
</feature>
<gene>
    <name evidence="1" type="primary">rpsC</name>
    <name type="ordered locus">MLBr01857</name>
</gene>
<keyword id="KW-0687">Ribonucleoprotein</keyword>
<keyword id="KW-0689">Ribosomal protein</keyword>
<keyword id="KW-0694">RNA-binding</keyword>
<keyword id="KW-0699">rRNA-binding</keyword>
<organism>
    <name type="scientific">Mycobacterium leprae (strain Br4923)</name>
    <dbReference type="NCBI Taxonomy" id="561304"/>
    <lineage>
        <taxon>Bacteria</taxon>
        <taxon>Bacillati</taxon>
        <taxon>Actinomycetota</taxon>
        <taxon>Actinomycetes</taxon>
        <taxon>Mycobacteriales</taxon>
        <taxon>Mycobacteriaceae</taxon>
        <taxon>Mycobacterium</taxon>
    </lineage>
</organism>
<name>RS3_MYCLB</name>
<protein>
    <recommendedName>
        <fullName evidence="1">Small ribosomal subunit protein uS3</fullName>
    </recommendedName>
    <alternativeName>
        <fullName evidence="3">30S ribosomal protein S3</fullName>
    </alternativeName>
</protein>
<dbReference type="EMBL" id="FM211192">
    <property type="protein sequence ID" value="CAR71953.1"/>
    <property type="molecule type" value="Genomic_DNA"/>
</dbReference>
<dbReference type="SMR" id="B8ZSB3"/>
<dbReference type="KEGG" id="mlb:MLBr01857"/>
<dbReference type="HOGENOM" id="CLU_058591_0_0_11"/>
<dbReference type="Proteomes" id="UP000006900">
    <property type="component" value="Chromosome"/>
</dbReference>
<dbReference type="GO" id="GO:0022627">
    <property type="term" value="C:cytosolic small ribosomal subunit"/>
    <property type="evidence" value="ECO:0007669"/>
    <property type="project" value="TreeGrafter"/>
</dbReference>
<dbReference type="GO" id="GO:0003729">
    <property type="term" value="F:mRNA binding"/>
    <property type="evidence" value="ECO:0007669"/>
    <property type="project" value="UniProtKB-UniRule"/>
</dbReference>
<dbReference type="GO" id="GO:0019843">
    <property type="term" value="F:rRNA binding"/>
    <property type="evidence" value="ECO:0007669"/>
    <property type="project" value="UniProtKB-UniRule"/>
</dbReference>
<dbReference type="GO" id="GO:0003735">
    <property type="term" value="F:structural constituent of ribosome"/>
    <property type="evidence" value="ECO:0007669"/>
    <property type="project" value="InterPro"/>
</dbReference>
<dbReference type="GO" id="GO:0006412">
    <property type="term" value="P:translation"/>
    <property type="evidence" value="ECO:0007669"/>
    <property type="project" value="UniProtKB-UniRule"/>
</dbReference>
<dbReference type="CDD" id="cd02412">
    <property type="entry name" value="KH-II_30S_S3"/>
    <property type="match status" value="1"/>
</dbReference>
<dbReference type="FunFam" id="3.30.1140.32:FF:000002">
    <property type="entry name" value="30S ribosomal protein S3"/>
    <property type="match status" value="1"/>
</dbReference>
<dbReference type="FunFam" id="3.30.300.20:FF:000001">
    <property type="entry name" value="30S ribosomal protein S3"/>
    <property type="match status" value="1"/>
</dbReference>
<dbReference type="Gene3D" id="3.30.300.20">
    <property type="match status" value="1"/>
</dbReference>
<dbReference type="Gene3D" id="3.30.1140.32">
    <property type="entry name" value="Ribosomal protein S3, C-terminal domain"/>
    <property type="match status" value="1"/>
</dbReference>
<dbReference type="HAMAP" id="MF_01309_B">
    <property type="entry name" value="Ribosomal_uS3_B"/>
    <property type="match status" value="1"/>
</dbReference>
<dbReference type="InterPro" id="IPR004087">
    <property type="entry name" value="KH_dom"/>
</dbReference>
<dbReference type="InterPro" id="IPR015946">
    <property type="entry name" value="KH_dom-like_a/b"/>
</dbReference>
<dbReference type="InterPro" id="IPR004044">
    <property type="entry name" value="KH_dom_type_2"/>
</dbReference>
<dbReference type="InterPro" id="IPR009019">
    <property type="entry name" value="KH_sf_prok-type"/>
</dbReference>
<dbReference type="InterPro" id="IPR036419">
    <property type="entry name" value="Ribosomal_S3_C_sf"/>
</dbReference>
<dbReference type="InterPro" id="IPR005704">
    <property type="entry name" value="Ribosomal_uS3_bac-typ"/>
</dbReference>
<dbReference type="InterPro" id="IPR001351">
    <property type="entry name" value="Ribosomal_uS3_C"/>
</dbReference>
<dbReference type="InterPro" id="IPR018280">
    <property type="entry name" value="Ribosomal_uS3_CS"/>
</dbReference>
<dbReference type="NCBIfam" id="TIGR01009">
    <property type="entry name" value="rpsC_bact"/>
    <property type="match status" value="1"/>
</dbReference>
<dbReference type="PANTHER" id="PTHR11760">
    <property type="entry name" value="30S/40S RIBOSOMAL PROTEIN S3"/>
    <property type="match status" value="1"/>
</dbReference>
<dbReference type="PANTHER" id="PTHR11760:SF19">
    <property type="entry name" value="SMALL RIBOSOMAL SUBUNIT PROTEIN US3C"/>
    <property type="match status" value="1"/>
</dbReference>
<dbReference type="Pfam" id="PF07650">
    <property type="entry name" value="KH_2"/>
    <property type="match status" value="1"/>
</dbReference>
<dbReference type="Pfam" id="PF00189">
    <property type="entry name" value="Ribosomal_S3_C"/>
    <property type="match status" value="1"/>
</dbReference>
<dbReference type="SMART" id="SM00322">
    <property type="entry name" value="KH"/>
    <property type="match status" value="1"/>
</dbReference>
<dbReference type="SUPFAM" id="SSF54814">
    <property type="entry name" value="Prokaryotic type KH domain (KH-domain type II)"/>
    <property type="match status" value="1"/>
</dbReference>
<dbReference type="SUPFAM" id="SSF54821">
    <property type="entry name" value="Ribosomal protein S3 C-terminal domain"/>
    <property type="match status" value="1"/>
</dbReference>
<dbReference type="PROSITE" id="PS50823">
    <property type="entry name" value="KH_TYPE_2"/>
    <property type="match status" value="1"/>
</dbReference>
<dbReference type="PROSITE" id="PS00548">
    <property type="entry name" value="RIBOSOMAL_S3"/>
    <property type="match status" value="1"/>
</dbReference>
<comment type="function">
    <text evidence="1">Binds the lower part of the 30S subunit head. Binds mRNA in the 70S ribosome, positioning it for translation.</text>
</comment>
<comment type="subunit">
    <text evidence="1">Part of the 30S ribosomal subunit. Forms a tight complex with proteins S10 and S14.</text>
</comment>
<comment type="similarity">
    <text evidence="1">Belongs to the universal ribosomal protein uS3 family.</text>
</comment>
<sequence length="281" mass="30918">MGQKINPHGFRLGITTGWKSRWYADKQYAEYVKEDVAIRRLLSTGLERAGIADVEIERTRDRVRVDIHTARPGIVIGRRGTEADRIRADLEKLTCKQVQLNILEVKNPESQAQLVAQGVAEQLSNRVAFRRAMRKAIQSAMRQPNVKGIRVQCSGRLGGAEMSRSEFYREGRVPLHTLRADIDYGLHEAKTTFGRIGVKVWIYKGDIVGGKREVTAVAPAGAERARRERPSGTRPRRSGAAGTTVTGTDAGRAVGGQESAATNIGHSDDSVVTHEPQIAES</sequence>
<reference key="1">
    <citation type="journal article" date="2009" name="Nat. Genet.">
        <title>Comparative genomic and phylogeographic analysis of Mycobacterium leprae.</title>
        <authorList>
            <person name="Monot M."/>
            <person name="Honore N."/>
            <person name="Garnier T."/>
            <person name="Zidane N."/>
            <person name="Sherafi D."/>
            <person name="Paniz-Mondolfi A."/>
            <person name="Matsuoka M."/>
            <person name="Taylor G.M."/>
            <person name="Donoghue H.D."/>
            <person name="Bouwman A."/>
            <person name="Mays S."/>
            <person name="Watson C."/>
            <person name="Lockwood D."/>
            <person name="Khamispour A."/>
            <person name="Dowlati Y."/>
            <person name="Jianping S."/>
            <person name="Rea T.H."/>
            <person name="Vera-Cabrera L."/>
            <person name="Stefani M.M."/>
            <person name="Banu S."/>
            <person name="Macdonald M."/>
            <person name="Sapkota B.R."/>
            <person name="Spencer J.S."/>
            <person name="Thomas J."/>
            <person name="Harshman K."/>
            <person name="Singh P."/>
            <person name="Busso P."/>
            <person name="Gattiker A."/>
            <person name="Rougemont J."/>
            <person name="Brennan P.J."/>
            <person name="Cole S.T."/>
        </authorList>
    </citation>
    <scope>NUCLEOTIDE SEQUENCE [LARGE SCALE GENOMIC DNA]</scope>
    <source>
        <strain>Br4923</strain>
    </source>
</reference>
<evidence type="ECO:0000255" key="1">
    <source>
        <dbReference type="HAMAP-Rule" id="MF_01309"/>
    </source>
</evidence>
<evidence type="ECO:0000256" key="2">
    <source>
        <dbReference type="SAM" id="MobiDB-lite"/>
    </source>
</evidence>
<evidence type="ECO:0000305" key="3"/>
<accession>B8ZSB3</accession>
<proteinExistence type="inferred from homology"/>